<name>FBD11_ARATH</name>
<reference key="1">
    <citation type="journal article" date="2000" name="Nature">
        <title>Sequence and analysis of chromosome 3 of the plant Arabidopsis thaliana.</title>
        <authorList>
            <person name="Salanoubat M."/>
            <person name="Lemcke K."/>
            <person name="Rieger M."/>
            <person name="Ansorge W."/>
            <person name="Unseld M."/>
            <person name="Fartmann B."/>
            <person name="Valle G."/>
            <person name="Bloecker H."/>
            <person name="Perez-Alonso M."/>
            <person name="Obermaier B."/>
            <person name="Delseny M."/>
            <person name="Boutry M."/>
            <person name="Grivell L.A."/>
            <person name="Mache R."/>
            <person name="Puigdomenech P."/>
            <person name="De Simone V."/>
            <person name="Choisne N."/>
            <person name="Artiguenave F."/>
            <person name="Robert C."/>
            <person name="Brottier P."/>
            <person name="Wincker P."/>
            <person name="Cattolico L."/>
            <person name="Weissenbach J."/>
            <person name="Saurin W."/>
            <person name="Quetier F."/>
            <person name="Schaefer M."/>
            <person name="Mueller-Auer S."/>
            <person name="Gabel C."/>
            <person name="Fuchs M."/>
            <person name="Benes V."/>
            <person name="Wurmbach E."/>
            <person name="Drzonek H."/>
            <person name="Erfle H."/>
            <person name="Jordan N."/>
            <person name="Bangert S."/>
            <person name="Wiedelmann R."/>
            <person name="Kranz H."/>
            <person name="Voss H."/>
            <person name="Holland R."/>
            <person name="Brandt P."/>
            <person name="Nyakatura G."/>
            <person name="Vezzi A."/>
            <person name="D'Angelo M."/>
            <person name="Pallavicini A."/>
            <person name="Toppo S."/>
            <person name="Simionati B."/>
            <person name="Conrad A."/>
            <person name="Hornischer K."/>
            <person name="Kauer G."/>
            <person name="Loehnert T.-H."/>
            <person name="Nordsiek G."/>
            <person name="Reichelt J."/>
            <person name="Scharfe M."/>
            <person name="Schoen O."/>
            <person name="Bargues M."/>
            <person name="Terol J."/>
            <person name="Climent J."/>
            <person name="Navarro P."/>
            <person name="Collado C."/>
            <person name="Perez-Perez A."/>
            <person name="Ottenwaelder B."/>
            <person name="Duchemin D."/>
            <person name="Cooke R."/>
            <person name="Laudie M."/>
            <person name="Berger-Llauro C."/>
            <person name="Purnelle B."/>
            <person name="Masuy D."/>
            <person name="de Haan M."/>
            <person name="Maarse A.C."/>
            <person name="Alcaraz J.-P."/>
            <person name="Cottet A."/>
            <person name="Casacuberta E."/>
            <person name="Monfort A."/>
            <person name="Argiriou A."/>
            <person name="Flores M."/>
            <person name="Liguori R."/>
            <person name="Vitale D."/>
            <person name="Mannhaupt G."/>
            <person name="Haase D."/>
            <person name="Schoof H."/>
            <person name="Rudd S."/>
            <person name="Zaccaria P."/>
            <person name="Mewes H.-W."/>
            <person name="Mayer K.F.X."/>
            <person name="Kaul S."/>
            <person name="Town C.D."/>
            <person name="Koo H.L."/>
            <person name="Tallon L.J."/>
            <person name="Jenkins J."/>
            <person name="Rooney T."/>
            <person name="Rizzo M."/>
            <person name="Walts A."/>
            <person name="Utterback T."/>
            <person name="Fujii C.Y."/>
            <person name="Shea T.P."/>
            <person name="Creasy T.H."/>
            <person name="Haas B."/>
            <person name="Maiti R."/>
            <person name="Wu D."/>
            <person name="Peterson J."/>
            <person name="Van Aken S."/>
            <person name="Pai G."/>
            <person name="Militscher J."/>
            <person name="Sellers P."/>
            <person name="Gill J.E."/>
            <person name="Feldblyum T.V."/>
            <person name="Preuss D."/>
            <person name="Lin X."/>
            <person name="Nierman W.C."/>
            <person name="Salzberg S.L."/>
            <person name="White O."/>
            <person name="Venter J.C."/>
            <person name="Fraser C.M."/>
            <person name="Kaneko T."/>
            <person name="Nakamura Y."/>
            <person name="Sato S."/>
            <person name="Kato T."/>
            <person name="Asamizu E."/>
            <person name="Sasamoto S."/>
            <person name="Kimura T."/>
            <person name="Idesawa K."/>
            <person name="Kawashima K."/>
            <person name="Kishida Y."/>
            <person name="Kiyokawa C."/>
            <person name="Kohara M."/>
            <person name="Matsumoto M."/>
            <person name="Matsuno A."/>
            <person name="Muraki A."/>
            <person name="Nakayama S."/>
            <person name="Nakazaki N."/>
            <person name="Shinpo S."/>
            <person name="Takeuchi C."/>
            <person name="Wada T."/>
            <person name="Watanabe A."/>
            <person name="Yamada M."/>
            <person name="Yasuda M."/>
            <person name="Tabata S."/>
        </authorList>
    </citation>
    <scope>NUCLEOTIDE SEQUENCE [LARGE SCALE GENOMIC DNA]</scope>
    <source>
        <strain>cv. Columbia</strain>
    </source>
</reference>
<reference key="2">
    <citation type="journal article" date="2017" name="Plant J.">
        <title>Araport11: a complete reannotation of the Arabidopsis thaliana reference genome.</title>
        <authorList>
            <person name="Cheng C.Y."/>
            <person name="Krishnakumar V."/>
            <person name="Chan A.P."/>
            <person name="Thibaud-Nissen F."/>
            <person name="Schobel S."/>
            <person name="Town C.D."/>
        </authorList>
    </citation>
    <scope>GENOME REANNOTATION</scope>
    <source>
        <strain>cv. Columbia</strain>
    </source>
</reference>
<sequence>MRNQGFTKEDRMNQLPEDLILRILSFLPTELVIATSVLSKQWRSLWKLVPNLEFDSDDYESEHYTFSEIVCKSFLSLKAPVLKSLHLSFRKSVNPVDIGLWIGIAFARHLRELVLYVAPKQTFTFPSSLCICNTLETLKLILGIHVDIPCPVLLKSLRTLHLDSVSYKDEESIRNLLSSCPILENLVVYEYWYNVVNFDIEVPSLKRLEICDVLHKKEFRRYTINVPCLKYLRIEGLNKDFELCLNAPELVEAYFTKGSLIIADKFLGSLKSAKRLSLDILALKMHTRREEWWNLLTVMLDSSPKLQVLKLIDHTQDVSKDNVVSEKWNEPKYVPECLLSHLETFVWIRYDWEREEEKEVATYILRNARWLKKGTISTNPIESKDLEKLEERRKMLNELDSVVRASNSCNLVFEFE</sequence>
<comment type="sequence caution" evidence="2">
    <conflict type="erroneous gene model prediction">
        <sequence resource="EMBL-CDS" id="CAB89228"/>
    </conflict>
</comment>
<proteinExistence type="predicted"/>
<keyword id="KW-1185">Reference proteome</keyword>
<organism>
    <name type="scientific">Arabidopsis thaliana</name>
    <name type="common">Mouse-ear cress</name>
    <dbReference type="NCBI Taxonomy" id="3702"/>
    <lineage>
        <taxon>Eukaryota</taxon>
        <taxon>Viridiplantae</taxon>
        <taxon>Streptophyta</taxon>
        <taxon>Embryophyta</taxon>
        <taxon>Tracheophyta</taxon>
        <taxon>Spermatophyta</taxon>
        <taxon>Magnoliopsida</taxon>
        <taxon>eudicotyledons</taxon>
        <taxon>Gunneridae</taxon>
        <taxon>Pentapetalae</taxon>
        <taxon>rosids</taxon>
        <taxon>malvids</taxon>
        <taxon>Brassicales</taxon>
        <taxon>Brassicaceae</taxon>
        <taxon>Camelineae</taxon>
        <taxon>Arabidopsis</taxon>
    </lineage>
</organism>
<protein>
    <recommendedName>
        <fullName>FBD-associated F-box protein At3g52670</fullName>
    </recommendedName>
</protein>
<accession>Q9LXJ7</accession>
<accession>F4J823</accession>
<gene>
    <name type="ordered locus">At3g52670</name>
    <name type="ORF">F3C22.70</name>
</gene>
<evidence type="ECO:0000255" key="1">
    <source>
        <dbReference type="PROSITE-ProRule" id="PRU00080"/>
    </source>
</evidence>
<evidence type="ECO:0000305" key="2"/>
<dbReference type="EMBL" id="AL353912">
    <property type="protein sequence ID" value="CAB89228.1"/>
    <property type="status" value="ALT_SEQ"/>
    <property type="molecule type" value="Genomic_DNA"/>
</dbReference>
<dbReference type="EMBL" id="CP002686">
    <property type="status" value="NOT_ANNOTATED_CDS"/>
    <property type="molecule type" value="Genomic_DNA"/>
</dbReference>
<dbReference type="PIR" id="T49020">
    <property type="entry name" value="T49020"/>
</dbReference>
<dbReference type="SMR" id="Q9LXJ7"/>
<dbReference type="FunCoup" id="Q9LXJ7">
    <property type="interactions" value="2"/>
</dbReference>
<dbReference type="PaxDb" id="3702-AT3G52670.1"/>
<dbReference type="Araport" id="AT3G52670"/>
<dbReference type="TAIR" id="AT3G52670"/>
<dbReference type="InParanoid" id="Q9LXJ7"/>
<dbReference type="PhylomeDB" id="Q9LXJ7"/>
<dbReference type="PRO" id="PR:Q9LXJ7"/>
<dbReference type="Proteomes" id="UP000006548">
    <property type="component" value="Chromosome 3"/>
</dbReference>
<dbReference type="ExpressionAtlas" id="Q9LXJ7">
    <property type="expression patterns" value="baseline and differential"/>
</dbReference>
<dbReference type="CDD" id="cd22160">
    <property type="entry name" value="F-box_AtFBL13-like"/>
    <property type="match status" value="1"/>
</dbReference>
<dbReference type="Gene3D" id="1.20.1280.50">
    <property type="match status" value="1"/>
</dbReference>
<dbReference type="Gene3D" id="3.80.10.10">
    <property type="entry name" value="Ribonuclease Inhibitor"/>
    <property type="match status" value="1"/>
</dbReference>
<dbReference type="InterPro" id="IPR036047">
    <property type="entry name" value="F-box-like_dom_sf"/>
</dbReference>
<dbReference type="InterPro" id="IPR053781">
    <property type="entry name" value="F-box_AtFBL13-like"/>
</dbReference>
<dbReference type="InterPro" id="IPR001810">
    <property type="entry name" value="F-box_dom"/>
</dbReference>
<dbReference type="InterPro" id="IPR006566">
    <property type="entry name" value="FBD"/>
</dbReference>
<dbReference type="InterPro" id="IPR050232">
    <property type="entry name" value="FBL13/AtMIF1-like"/>
</dbReference>
<dbReference type="InterPro" id="IPR032675">
    <property type="entry name" value="LRR_dom_sf"/>
</dbReference>
<dbReference type="InterPro" id="IPR055411">
    <property type="entry name" value="LRR_FXL15/At3g58940/PEG3-like"/>
</dbReference>
<dbReference type="PANTHER" id="PTHR31900:SF34">
    <property type="entry name" value="EMB|CAB62440.1-RELATED"/>
    <property type="match status" value="1"/>
</dbReference>
<dbReference type="PANTHER" id="PTHR31900">
    <property type="entry name" value="F-BOX/RNI SUPERFAMILY PROTEIN-RELATED"/>
    <property type="match status" value="1"/>
</dbReference>
<dbReference type="Pfam" id="PF00646">
    <property type="entry name" value="F-box"/>
    <property type="match status" value="1"/>
</dbReference>
<dbReference type="Pfam" id="PF08387">
    <property type="entry name" value="FBD"/>
    <property type="match status" value="1"/>
</dbReference>
<dbReference type="Pfam" id="PF24758">
    <property type="entry name" value="LRR_At5g56370"/>
    <property type="match status" value="1"/>
</dbReference>
<dbReference type="SMART" id="SM00579">
    <property type="entry name" value="FBD"/>
    <property type="match status" value="1"/>
</dbReference>
<dbReference type="SMART" id="SM00256">
    <property type="entry name" value="FBOX"/>
    <property type="match status" value="1"/>
</dbReference>
<dbReference type="SUPFAM" id="SSF81383">
    <property type="entry name" value="F-box domain"/>
    <property type="match status" value="1"/>
</dbReference>
<dbReference type="SUPFAM" id="SSF52047">
    <property type="entry name" value="RNI-like"/>
    <property type="match status" value="1"/>
</dbReference>
<dbReference type="PROSITE" id="PS50181">
    <property type="entry name" value="FBOX"/>
    <property type="match status" value="1"/>
</dbReference>
<feature type="chain" id="PRO_0000283144" description="FBD-associated F-box protein At3g52670">
    <location>
        <begin position="1"/>
        <end position="416"/>
    </location>
</feature>
<feature type="domain" description="F-box" evidence="1">
    <location>
        <begin position="9"/>
        <end position="62"/>
    </location>
</feature>
<feature type="domain" description="FBD">
    <location>
        <begin position="327"/>
        <end position="378"/>
    </location>
</feature>